<feature type="chain" id="PRO_0000298079" description="Cell division topological specificity factor">
    <location>
        <begin position="1"/>
        <end position="83"/>
    </location>
</feature>
<gene>
    <name evidence="1" type="primary">minE</name>
    <name type="ordered locus">BP3229</name>
</gene>
<dbReference type="EMBL" id="BX640420">
    <property type="protein sequence ID" value="CAE43495.1"/>
    <property type="molecule type" value="Genomic_DNA"/>
</dbReference>
<dbReference type="RefSeq" id="NP_881779.1">
    <property type="nucleotide sequence ID" value="NC_002929.2"/>
</dbReference>
<dbReference type="RefSeq" id="WP_003814252.1">
    <property type="nucleotide sequence ID" value="NZ_CP039022.1"/>
</dbReference>
<dbReference type="SMR" id="Q7VU91"/>
<dbReference type="STRING" id="257313.BP3229"/>
<dbReference type="PaxDb" id="257313-BP3229"/>
<dbReference type="GeneID" id="93205370"/>
<dbReference type="KEGG" id="bpe:BP3229"/>
<dbReference type="PATRIC" id="fig|257313.5.peg.3490"/>
<dbReference type="eggNOG" id="COG0851">
    <property type="taxonomic scope" value="Bacteria"/>
</dbReference>
<dbReference type="HOGENOM" id="CLU_137929_2_1_4"/>
<dbReference type="Proteomes" id="UP000002676">
    <property type="component" value="Chromosome"/>
</dbReference>
<dbReference type="GO" id="GO:0051301">
    <property type="term" value="P:cell division"/>
    <property type="evidence" value="ECO:0007669"/>
    <property type="project" value="UniProtKB-KW"/>
</dbReference>
<dbReference type="GO" id="GO:0032955">
    <property type="term" value="P:regulation of division septum assembly"/>
    <property type="evidence" value="ECO:0007669"/>
    <property type="project" value="InterPro"/>
</dbReference>
<dbReference type="FunFam" id="3.30.1070.10:FF:000001">
    <property type="entry name" value="Cell division topological specificity factor"/>
    <property type="match status" value="1"/>
</dbReference>
<dbReference type="Gene3D" id="3.30.1070.10">
    <property type="entry name" value="Cell division topological specificity factor MinE"/>
    <property type="match status" value="1"/>
</dbReference>
<dbReference type="HAMAP" id="MF_00262">
    <property type="entry name" value="MinE"/>
    <property type="match status" value="1"/>
</dbReference>
<dbReference type="InterPro" id="IPR005527">
    <property type="entry name" value="MinE"/>
</dbReference>
<dbReference type="InterPro" id="IPR036707">
    <property type="entry name" value="MinE_sf"/>
</dbReference>
<dbReference type="NCBIfam" id="TIGR01215">
    <property type="entry name" value="minE"/>
    <property type="match status" value="1"/>
</dbReference>
<dbReference type="NCBIfam" id="NF001422">
    <property type="entry name" value="PRK00296.1"/>
    <property type="match status" value="1"/>
</dbReference>
<dbReference type="NCBIfam" id="NF010595">
    <property type="entry name" value="PRK13989.1"/>
    <property type="match status" value="1"/>
</dbReference>
<dbReference type="Pfam" id="PF03776">
    <property type="entry name" value="MinE"/>
    <property type="match status" value="1"/>
</dbReference>
<dbReference type="SUPFAM" id="SSF55229">
    <property type="entry name" value="Cell division protein MinE topological specificity domain"/>
    <property type="match status" value="1"/>
</dbReference>
<proteinExistence type="inferred from homology"/>
<organism>
    <name type="scientific">Bordetella pertussis (strain Tohama I / ATCC BAA-589 / NCTC 13251)</name>
    <dbReference type="NCBI Taxonomy" id="257313"/>
    <lineage>
        <taxon>Bacteria</taxon>
        <taxon>Pseudomonadati</taxon>
        <taxon>Pseudomonadota</taxon>
        <taxon>Betaproteobacteria</taxon>
        <taxon>Burkholderiales</taxon>
        <taxon>Alcaligenaceae</taxon>
        <taxon>Bordetella</taxon>
    </lineage>
</organism>
<accession>Q7VU91</accession>
<protein>
    <recommendedName>
        <fullName evidence="1">Cell division topological specificity factor</fullName>
    </recommendedName>
</protein>
<sequence>MSFLSFLLGQKKSSASVAKERLQIILAHERGRGDSPDYLPQLQQELVAVISKYVKIDPEDIKVHLERQDTLEVLEVKIEMPQN</sequence>
<comment type="function">
    <text evidence="1">Prevents the cell division inhibition by proteins MinC and MinD at internal division sites while permitting inhibition at polar sites. This ensures cell division at the proper site by restricting the formation of a division septum at the midpoint of the long axis of the cell.</text>
</comment>
<comment type="similarity">
    <text evidence="1">Belongs to the MinE family.</text>
</comment>
<evidence type="ECO:0000255" key="1">
    <source>
        <dbReference type="HAMAP-Rule" id="MF_00262"/>
    </source>
</evidence>
<reference key="1">
    <citation type="journal article" date="2003" name="Nat. Genet.">
        <title>Comparative analysis of the genome sequences of Bordetella pertussis, Bordetella parapertussis and Bordetella bronchiseptica.</title>
        <authorList>
            <person name="Parkhill J."/>
            <person name="Sebaihia M."/>
            <person name="Preston A."/>
            <person name="Murphy L.D."/>
            <person name="Thomson N.R."/>
            <person name="Harris D.E."/>
            <person name="Holden M.T.G."/>
            <person name="Churcher C.M."/>
            <person name="Bentley S.D."/>
            <person name="Mungall K.L."/>
            <person name="Cerdeno-Tarraga A.-M."/>
            <person name="Temple L."/>
            <person name="James K.D."/>
            <person name="Harris B."/>
            <person name="Quail M.A."/>
            <person name="Achtman M."/>
            <person name="Atkin R."/>
            <person name="Baker S."/>
            <person name="Basham D."/>
            <person name="Bason N."/>
            <person name="Cherevach I."/>
            <person name="Chillingworth T."/>
            <person name="Collins M."/>
            <person name="Cronin A."/>
            <person name="Davis P."/>
            <person name="Doggett J."/>
            <person name="Feltwell T."/>
            <person name="Goble A."/>
            <person name="Hamlin N."/>
            <person name="Hauser H."/>
            <person name="Holroyd S."/>
            <person name="Jagels K."/>
            <person name="Leather S."/>
            <person name="Moule S."/>
            <person name="Norberczak H."/>
            <person name="O'Neil S."/>
            <person name="Ormond D."/>
            <person name="Price C."/>
            <person name="Rabbinowitsch E."/>
            <person name="Rutter S."/>
            <person name="Sanders M."/>
            <person name="Saunders D."/>
            <person name="Seeger K."/>
            <person name="Sharp S."/>
            <person name="Simmonds M."/>
            <person name="Skelton J."/>
            <person name="Squares R."/>
            <person name="Squares S."/>
            <person name="Stevens K."/>
            <person name="Unwin L."/>
            <person name="Whitehead S."/>
            <person name="Barrell B.G."/>
            <person name="Maskell D.J."/>
        </authorList>
    </citation>
    <scope>NUCLEOTIDE SEQUENCE [LARGE SCALE GENOMIC DNA]</scope>
    <source>
        <strain>Tohama I / ATCC BAA-589 / NCTC 13251</strain>
    </source>
</reference>
<keyword id="KW-0131">Cell cycle</keyword>
<keyword id="KW-0132">Cell division</keyword>
<keyword id="KW-1185">Reference proteome</keyword>
<name>MINE_BORPE</name>